<dbReference type="EMBL" id="AE017261">
    <property type="protein sequence ID" value="AAT43436.1"/>
    <property type="molecule type" value="Genomic_DNA"/>
</dbReference>
<dbReference type="RefSeq" id="WP_011177652.1">
    <property type="nucleotide sequence ID" value="NC_005877.1"/>
</dbReference>
<dbReference type="STRING" id="263820.PTO0851"/>
<dbReference type="PaxDb" id="263820-PTO0851"/>
<dbReference type="GeneID" id="2845374"/>
<dbReference type="KEGG" id="pto:PTO0851"/>
<dbReference type="eggNOG" id="arCOG04477">
    <property type="taxonomic scope" value="Archaea"/>
</dbReference>
<dbReference type="HOGENOM" id="CLU_121764_0_0_2"/>
<dbReference type="InParanoid" id="Q6L0R6"/>
<dbReference type="OrthoDB" id="24613at2157"/>
<dbReference type="Proteomes" id="UP000000438">
    <property type="component" value="Chromosome"/>
</dbReference>
<dbReference type="HAMAP" id="MF_00498">
    <property type="entry name" value="UPF0179"/>
    <property type="match status" value="1"/>
</dbReference>
<dbReference type="InterPro" id="IPR005369">
    <property type="entry name" value="UPF0179"/>
</dbReference>
<dbReference type="NCBIfam" id="NF002253">
    <property type="entry name" value="PRK01177.1"/>
    <property type="match status" value="1"/>
</dbReference>
<dbReference type="PANTHER" id="PTHR40699">
    <property type="entry name" value="UPF0179 PROTEIN MJ1627"/>
    <property type="match status" value="1"/>
</dbReference>
<dbReference type="PANTHER" id="PTHR40699:SF1">
    <property type="entry name" value="UPF0179 PROTEIN MJ1627"/>
    <property type="match status" value="1"/>
</dbReference>
<dbReference type="Pfam" id="PF03684">
    <property type="entry name" value="UPF0179"/>
    <property type="match status" value="1"/>
</dbReference>
<dbReference type="PIRSF" id="PIRSF006595">
    <property type="entry name" value="UCP006595"/>
    <property type="match status" value="1"/>
</dbReference>
<evidence type="ECO:0000255" key="1">
    <source>
        <dbReference type="HAMAP-Rule" id="MF_00498"/>
    </source>
</evidence>
<reference key="1">
    <citation type="journal article" date="2004" name="Proc. Natl. Acad. Sci. U.S.A.">
        <title>Genome sequence of Picrophilus torridus and its implications for life around pH 0.</title>
        <authorList>
            <person name="Fuetterer O."/>
            <person name="Angelov A."/>
            <person name="Liesegang H."/>
            <person name="Gottschalk G."/>
            <person name="Schleper C."/>
            <person name="Schepers B."/>
            <person name="Dock C."/>
            <person name="Antranikian G."/>
            <person name="Liebl W."/>
        </authorList>
    </citation>
    <scope>NUCLEOTIDE SEQUENCE [LARGE SCALE GENOMIC DNA]</scope>
    <source>
        <strain>ATCC 700027 / DSM 9790 / JCM 10055 / NBRC 100828 / KAW 2/3</strain>
    </source>
</reference>
<comment type="similarity">
    <text evidence="1">Belongs to the UPF0179 family.</text>
</comment>
<sequence>MSKITLIGTDLAKAGMEFTFVGPLSGKCDECSLRNVCFNLEKGRHYRILNVRENINPCFIYNKNKVSTIEVEEATSTFNVQYSRRIMEGSSIELKSMECDYLTCPNIETCNLIHIKEPRKIVIKKILGRIECPKGYDMRKIES</sequence>
<protein>
    <recommendedName>
        <fullName evidence="1">UPF0179 protein PTO0851</fullName>
    </recommendedName>
</protein>
<feature type="chain" id="PRO_0000378134" description="UPF0179 protein PTO0851">
    <location>
        <begin position="1"/>
        <end position="143"/>
    </location>
</feature>
<name>Y851_PICTO</name>
<accession>Q6L0R6</accession>
<gene>
    <name type="ordered locus">PTO0851</name>
</gene>
<organism>
    <name type="scientific">Picrophilus torridus (strain ATCC 700027 / DSM 9790 / JCM 10055 / NBRC 100828 / KAW 2/3)</name>
    <dbReference type="NCBI Taxonomy" id="1122961"/>
    <lineage>
        <taxon>Archaea</taxon>
        <taxon>Methanobacteriati</taxon>
        <taxon>Thermoplasmatota</taxon>
        <taxon>Thermoplasmata</taxon>
        <taxon>Thermoplasmatales</taxon>
        <taxon>Picrophilaceae</taxon>
        <taxon>Picrophilus</taxon>
    </lineage>
</organism>
<proteinExistence type="inferred from homology"/>